<name>HCF1_PASFU</name>
<proteinExistence type="evidence at transcript level"/>
<accession>Q00367</accession>
<dbReference type="EMBL" id="X98578">
    <property type="protein sequence ID" value="CAA67187.1"/>
    <property type="molecule type" value="Genomic_DNA"/>
</dbReference>
<dbReference type="EMBL" id="CP090166">
    <property type="protein sequence ID" value="UJO16371.1"/>
    <property type="molecule type" value="Genomic_DNA"/>
</dbReference>
<dbReference type="RefSeq" id="XP_047760737.1">
    <property type="nucleotide sequence ID" value="XM_047903472.1"/>
</dbReference>
<dbReference type="GeneID" id="71984202"/>
<dbReference type="OrthoDB" id="3648449at2759"/>
<dbReference type="Proteomes" id="UP000756132">
    <property type="component" value="Chromosome 4"/>
</dbReference>
<organism>
    <name type="scientific">Passalora fulva</name>
    <name type="common">Tomato leaf mold</name>
    <name type="synonym">Cladosporium fulvum</name>
    <dbReference type="NCBI Taxonomy" id="5499"/>
    <lineage>
        <taxon>Eukaryota</taxon>
        <taxon>Fungi</taxon>
        <taxon>Dikarya</taxon>
        <taxon>Ascomycota</taxon>
        <taxon>Pezizomycotina</taxon>
        <taxon>Dothideomycetes</taxon>
        <taxon>Dothideomycetidae</taxon>
        <taxon>Mycosphaerellales</taxon>
        <taxon>Mycosphaerellaceae</taxon>
        <taxon>Fulvia</taxon>
    </lineage>
</organism>
<protein>
    <recommendedName>
        <fullName evidence="8">Class I hydrophobin 1</fullName>
    </recommendedName>
</protein>
<evidence type="ECO:0000250" key="1">
    <source>
        <dbReference type="UniProtKB" id="Q04571"/>
    </source>
</evidence>
<evidence type="ECO:0000255" key="2"/>
<evidence type="ECO:0000255" key="3">
    <source>
        <dbReference type="PROSITE-ProRule" id="PRU00498"/>
    </source>
</evidence>
<evidence type="ECO:0000269" key="4">
    <source>
    </source>
</evidence>
<evidence type="ECO:0000269" key="5">
    <source>
    </source>
</evidence>
<evidence type="ECO:0000269" key="6">
    <source>
    </source>
</evidence>
<evidence type="ECO:0000269" key="7">
    <source>
    </source>
</evidence>
<evidence type="ECO:0000303" key="8">
    <source>
    </source>
</evidence>
<evidence type="ECO:0000303" key="9">
    <source>
    </source>
</evidence>
<evidence type="ECO:0000305" key="10"/>
<keyword id="KW-0134">Cell wall</keyword>
<keyword id="KW-1015">Disulfide bond</keyword>
<keyword id="KW-0325">Glycoprotein</keyword>
<keyword id="KW-1185">Reference proteome</keyword>
<keyword id="KW-0964">Secreted</keyword>
<keyword id="KW-0732">Signal</keyword>
<reference key="1">
    <citation type="journal article" date="1997" name="Gene">
        <title>HCF-1, a hydrophobin from the tomato pathogen Cladosporium fulvum.</title>
        <authorList>
            <person name="Spanu P."/>
        </authorList>
    </citation>
    <scope>NUCLEOTIDE SEQUENCE [GENOMIC DNA]</scope>
    <scope>DEVELOPMENTAL STAGE</scope>
    <scope>SUBCELLULAR LOCATION</scope>
    <source>
        <strain>Cf4</strain>
    </source>
</reference>
<reference key="2">
    <citation type="journal article" date="2022" name="Microb. Genom.">
        <title>A chromosome-scale genome assembly of the tomato pathogen Cladosporium fulvum reveals a compartmentalized genome architecture and the presence of a dispensable chromosome.</title>
        <authorList>
            <person name="Zaccaron A.Z."/>
            <person name="Chen L.-H."/>
            <person name="Samaras A."/>
            <person name="Stergiopoulos I."/>
        </authorList>
    </citation>
    <scope>NUCLEOTIDE SEQUENCE [LARGE SCALE GENOMIC DNA]</scope>
    <source>
        <strain>Race5_Kim</strain>
    </source>
</reference>
<reference key="3">
    <citation type="journal article" date="1999" name="Mol. Gen. Genet.">
        <title>Isolation and characterisation of five different hydrophobin-encoding cDNAs from the fungal tomato pathogen Cladosporium fulvum.</title>
        <authorList>
            <person name="Segers G.C."/>
            <person name="Hamada W."/>
            <person name="Oliver R.P."/>
            <person name="Spanu P.D."/>
        </authorList>
    </citation>
    <scope>INDUCTION</scope>
    <scope>DISRUPTION PHENOTYPE</scope>
    <source>
        <strain>Race 4</strain>
    </source>
</reference>
<reference key="4">
    <citation type="journal article" date="2001" name="Fungal Genet. Biol.">
        <title>The hydrophobin HCf-1 of Cladosporium fulvum is required for efficient water-mediated dispersal of conidia.</title>
        <authorList>
            <person name="Whiteford J.R."/>
            <person name="Spanu P.D."/>
        </authorList>
    </citation>
    <scope>FUNCTION</scope>
    <scope>DISRUPTION PHENOTYPE</scope>
</reference>
<reference key="5">
    <citation type="journal article" date="2004" name="Fungal Genet. Biol.">
        <title>Stage-specific cellular localisation of two hydrophobins during plant infection by the pathogenic fungus Cladosporium fulvum.</title>
        <authorList>
            <person name="Whiteford J.R."/>
            <person name="Lacroix H."/>
            <person name="Talbot N.J."/>
            <person name="Spanu P.D."/>
        </authorList>
    </citation>
    <scope>FUNCTION</scope>
    <scope>SUBCELLULAR LOCATION</scope>
    <scope>TISSUE SPECIFICITY</scope>
    <scope>DISRUPTION PHENOTYPE</scope>
</reference>
<comment type="function">
    <text evidence="5 6 10">Aerial growth, conidiation, and dispersal of filamentous fungi in the environment rely upon a capability of their secreting small amphipathic proteins called hydrophobins (HPBs) with low sequence identity. Class I can self-assemble into an outermost layer of rodlet bundles on aerial cell surfaces, conferring cellular hydrophobicity that supports fungal growth, development and dispersal; whereas Class II form highly ordered films at water-air interfaces through intermolecular interactions but contribute nothing to the rodlet structure (Probable). Hcf-1 is a class I hydrophobin that is not necessary for the development of hyphae or conidia but acts as the main determinant of conidium hydrophobicity and, thus, is required for efficient water-mediated dispersal of conidia (PubMed:11343402, PubMed:15121084). Forms a component of the rodlet layer, but other hydrophobins must also participate in this proces (PubMed:15121084).</text>
</comment>
<comment type="subunit">
    <text evidence="1">Self-assembles to form functional amyloid fibrils called rodlets. Self-assembly into fibrillar rodlets occurs spontaneously at hydrophobic:hydrophilic interfaces and the rodlets further associate laterally to form amphipathic monolayers.</text>
</comment>
<comment type="subcellular location">
    <subcellularLocation>
        <location evidence="6 7">Secreted</location>
    </subcellularLocation>
    <subcellularLocation>
        <location evidence="6">Secreted</location>
        <location evidence="6">Cell wall</location>
    </subcellularLocation>
</comment>
<comment type="tissue specificity">
    <text evidence="6">Abundant on conidia and aerial structures formed in vitro and emerging from disease lesions on infected tomato plants.</text>
</comment>
<comment type="developmental stage">
    <text evidence="7">Expressed in growing mycelium and conidia but its quantity diminishes transiently after germination.</text>
</comment>
<comment type="induction">
    <text evidence="4">Expression is increased during sporulation (PubMed:10394901). Expression up-regulated by carbon or nitrogen starvation (PubMed:10394901).</text>
</comment>
<comment type="disruption phenotype">
    <text evidence="4 5 6">Leads to the repression of hcf-4 and induction of hcf-2 and hcf-3 (PubMed:10394901). Decreases the hydrophobicity of the cell surface (PubMed:11343402, PubMed:15121084). Leads to very few rodlets, which are found in dispersed patches (PubMed:15121084). Does not affect the ability of the fungus to grow in vitro on agar plates or in liquid culture (PubMed:11343402). Does neither affect mycelium growth and sporulation, nor the frequency and speed of conidium germination (PubMed:11343402).</text>
</comment>
<comment type="similarity">
    <text evidence="10">Belongs to the fungal hydrophobin family.</text>
</comment>
<gene>
    <name evidence="9" type="primary">hcf-1</name>
    <name type="ORF">CLAFUR5_04324</name>
</gene>
<feature type="signal peptide" evidence="2">
    <location>
        <begin position="1"/>
        <end position="17"/>
    </location>
</feature>
<feature type="chain" id="PRO_5040716704" description="Class I hydrophobin 1">
    <location>
        <begin position="18"/>
        <end position="105"/>
    </location>
</feature>
<feature type="glycosylation site" description="N-linked (GlcNAc...) asparagine" evidence="3">
    <location>
        <position position="48"/>
    </location>
</feature>
<feature type="glycosylation site" description="N-linked (GlcNAc...) asparagine" evidence="3">
    <location>
        <position position="67"/>
    </location>
</feature>
<feature type="glycosylation site" description="N-linked (GlcNAc...) asparagine" evidence="3">
    <location>
        <position position="97"/>
    </location>
</feature>
<feature type="disulfide bond" evidence="1">
    <location>
        <begin position="36"/>
        <end position="85"/>
    </location>
</feature>
<feature type="disulfide bond" evidence="1">
    <location>
        <begin position="44"/>
        <end position="78"/>
    </location>
</feature>
<feature type="disulfide bond" evidence="1">
    <location>
        <begin position="45"/>
        <end position="63"/>
    </location>
</feature>
<feature type="disulfide bond" evidence="1">
    <location>
        <begin position="86"/>
        <end position="100"/>
    </location>
</feature>
<sequence length="105" mass="10455">MQFTSFAILAISAVASARVTRRDDSSATGADKGGTCAVGSQISCCTTNSSGSDILGNVLGGSCLLDNVSLISSLNSNCPAGNTFCCPSNQDGTLNINVSCIPVSA</sequence>